<comment type="function">
    <text evidence="1 4 6 9 15 17">Regulator of phosphate homeostasis (PubMed:11062477). Inhibits renal tubular phosphate transport by reducing SLC34A1 levels (PubMed:11409890). Up-regulates EGR1 expression in the presence of KL (By similarity). Acts directly on the parathyroid to decrease PTH secretion (By similarity). Regulator of vitamin-D metabolism (PubMed:15040831). Negatively regulates osteoblast differentiation and matrix mineralization (PubMed:18282132).</text>
</comment>
<comment type="subunit">
    <text evidence="2 15">Interacts with FGFR1, FGFR2, FGFR3 and FGFR4 (PubMed:16597617). Affinity between fibroblast growth factors (FGFs) and their receptors is increased by KL and heparan sulfate glycosaminoglycans that function as coreceptors (By similarity).</text>
</comment>
<comment type="interaction">
    <interactant intactId="EBI-6594125">
        <id>Q9GZV9</id>
    </interactant>
    <interactant intactId="EBI-1028277">
        <id>P11362</id>
        <label>FGFR1</label>
    </interactant>
    <organismsDiffer>false</organismsDiffer>
    <experiments>2</experiments>
</comment>
<comment type="interaction">
    <interactant intactId="EBI-6594125">
        <id>Q9GZV9</id>
    </interactant>
    <interactant intactId="EBI-1570828">
        <id>O35082</id>
        <label>Kl</label>
    </interactant>
    <organismsDiffer>true</organismsDiffer>
    <experiments>5</experiments>
</comment>
<comment type="subcellular location">
    <subcellularLocation>
        <location evidence="16">Secreted</location>
    </subcellularLocation>
    <text>Secretion is dependent on O-glycosylation.</text>
</comment>
<comment type="tissue specificity">
    <text evidence="8">Expressed in osteogenic cells particularly during phases of active bone remodeling. In adult trabecular bone, expressed in osteocytes and flattened bone-lining cells (inactive osteoblasts).</text>
</comment>
<comment type="PTM">
    <text evidence="5 7 10">Following secretion this protein is inactivated by cleavage into a N-terminal fragment and a C-terminal fragment. The processing is effected by proprotein convertases.</text>
</comment>
<comment type="PTM">
    <text evidence="16 19">O-glycosylated at Thr-171 and Thr-178 by GALNT3 and glycosylation of Thr-178 requires previous glycosylation at Thr171. Glycosylation is necessary for secretion; it blocks processing by proprotein convertases when the O-glycan is alpha 2,6-sialylated. Competition between proprotein convertase cleavage and block of cleavage by O-glycosylation determines the level of secreted active FGF23.</text>
</comment>
<comment type="PTM">
    <text evidence="19">Phosphorylation at Ser-180 mediated by FAM20C slows down glycosylation at Thr-178 notably.</text>
</comment>
<comment type="disease" evidence="4 6 16">
    <disease id="DI-01212">
        <name>Hypophosphatemic rickets, autosomal dominant</name>
        <acronym>ADHR</acronym>
        <description>A disease characterized by isolated renal phosphate wasting, hypophosphatemia, and inappropriately normal 1,25-dihydroxyvitamin D3 (calcitriol) levels. Patients frequently present with bone pain, rickets, and tooth abscesses.</description>
        <dbReference type="MIM" id="193100"/>
    </disease>
    <text>The disease is caused by variants affecting the gene represented in this entry.</text>
</comment>
<comment type="disease" evidence="12 13 14 18">
    <disease id="DI-05253">
        <name>Tumoral calcinosis, hyperphosphatemic, familial, 2</name>
        <acronym>HFTC2</acronym>
        <description>A form of hyperphosphatemic tumoral calcinosis, a rare autosomal recessive metabolic disorder that manifests with hyperphosphatemia and massive calcium deposits in the skin and subcutaneous tissues. Some patients have recurrent, transient, painful swellings of the long bones associated with the radiographic findings of periosteal reaction and cortical hyperostosis and absence of skin involvement.</description>
        <dbReference type="MIM" id="617993"/>
    </disease>
    <text>The disease is caused by variants affecting the gene represented in this entry.</text>
</comment>
<comment type="similarity">
    <text evidence="21">Belongs to the heparin-binding growth factors family.</text>
</comment>
<gene>
    <name type="primary">FGF23</name>
    <name type="synonym">HYPF</name>
    <name type="ORF">UNQ3027/PRO9828</name>
</gene>
<organism>
    <name type="scientific">Homo sapiens</name>
    <name type="common">Human</name>
    <dbReference type="NCBI Taxonomy" id="9606"/>
    <lineage>
        <taxon>Eukaryota</taxon>
        <taxon>Metazoa</taxon>
        <taxon>Chordata</taxon>
        <taxon>Craniata</taxon>
        <taxon>Vertebrata</taxon>
        <taxon>Euteleostomi</taxon>
        <taxon>Mammalia</taxon>
        <taxon>Eutheria</taxon>
        <taxon>Euarchontoglires</taxon>
        <taxon>Primates</taxon>
        <taxon>Haplorrhini</taxon>
        <taxon>Catarrhini</taxon>
        <taxon>Hominidae</taxon>
        <taxon>Homo</taxon>
    </lineage>
</organism>
<name>FGF23_HUMAN</name>
<evidence type="ECO:0000250" key="1">
    <source>
        <dbReference type="UniProtKB" id="Q8VI82"/>
    </source>
</evidence>
<evidence type="ECO:0000250" key="2">
    <source>
        <dbReference type="UniProtKB" id="Q9EPC2"/>
    </source>
</evidence>
<evidence type="ECO:0000256" key="3">
    <source>
        <dbReference type="SAM" id="MobiDB-lite"/>
    </source>
</evidence>
<evidence type="ECO:0000269" key="4">
    <source>
    </source>
</evidence>
<evidence type="ECO:0000269" key="5">
    <source>
    </source>
</evidence>
<evidence type="ECO:0000269" key="6">
    <source>
    </source>
</evidence>
<evidence type="ECO:0000269" key="7">
    <source>
    </source>
</evidence>
<evidence type="ECO:0000269" key="8">
    <source>
    </source>
</evidence>
<evidence type="ECO:0000269" key="9">
    <source>
    </source>
</evidence>
<evidence type="ECO:0000269" key="10">
    <source>
    </source>
</evidence>
<evidence type="ECO:0000269" key="11">
    <source>
    </source>
</evidence>
<evidence type="ECO:0000269" key="12">
    <source>
    </source>
</evidence>
<evidence type="ECO:0000269" key="13">
    <source>
    </source>
</evidence>
<evidence type="ECO:0000269" key="14">
    <source>
    </source>
</evidence>
<evidence type="ECO:0000269" key="15">
    <source>
    </source>
</evidence>
<evidence type="ECO:0000269" key="16">
    <source>
    </source>
</evidence>
<evidence type="ECO:0000269" key="17">
    <source>
    </source>
</evidence>
<evidence type="ECO:0000269" key="18">
    <source>
    </source>
</evidence>
<evidence type="ECO:0000269" key="19">
    <source>
    </source>
</evidence>
<evidence type="ECO:0000269" key="20">
    <source ref="5"/>
</evidence>
<evidence type="ECO:0000305" key="21"/>
<evidence type="ECO:0007829" key="22">
    <source>
        <dbReference type="PDB" id="2P39"/>
    </source>
</evidence>
<evidence type="ECO:0007829" key="23">
    <source>
        <dbReference type="PDB" id="5W21"/>
    </source>
</evidence>
<evidence type="ECO:0007829" key="24">
    <source>
        <dbReference type="PDB" id="7YSH"/>
    </source>
</evidence>
<evidence type="ECO:0007829" key="25">
    <source>
        <dbReference type="PDB" id="7YSW"/>
    </source>
</evidence>
<dbReference type="EMBL" id="AB037973">
    <property type="protein sequence ID" value="BAB13477.1"/>
    <property type="molecule type" value="mRNA"/>
</dbReference>
<dbReference type="EMBL" id="AF263537">
    <property type="protein sequence ID" value="AAG09917.1"/>
    <property type="molecule type" value="mRNA"/>
</dbReference>
<dbReference type="EMBL" id="AB047858">
    <property type="protein sequence ID" value="BAB55889.1"/>
    <property type="molecule type" value="mRNA"/>
</dbReference>
<dbReference type="EMBL" id="AY358323">
    <property type="protein sequence ID" value="AAQ88689.1"/>
    <property type="molecule type" value="mRNA"/>
</dbReference>
<dbReference type="EMBL" id="AY566236">
    <property type="protein sequence ID" value="AAS59157.1"/>
    <property type="molecule type" value="Genomic_DNA"/>
</dbReference>
<dbReference type="EMBL" id="BC069333">
    <property type="protein sequence ID" value="AAH69333.1"/>
    <property type="molecule type" value="mRNA"/>
</dbReference>
<dbReference type="EMBL" id="BC096713">
    <property type="protein sequence ID" value="AAH96713.1"/>
    <property type="molecule type" value="mRNA"/>
</dbReference>
<dbReference type="EMBL" id="BC098147">
    <property type="protein sequence ID" value="AAH98147.1"/>
    <property type="molecule type" value="mRNA"/>
</dbReference>
<dbReference type="EMBL" id="BC098252">
    <property type="protein sequence ID" value="AAH98252.1"/>
    <property type="molecule type" value="mRNA"/>
</dbReference>
<dbReference type="CCDS" id="CCDS8526.1"/>
<dbReference type="RefSeq" id="NP_065689.1">
    <property type="nucleotide sequence ID" value="NM_020638.3"/>
</dbReference>
<dbReference type="PDB" id="2P39">
    <property type="method" value="X-ray"/>
    <property type="resolution" value="1.50 A"/>
    <property type="chains" value="A=25-179"/>
</dbReference>
<dbReference type="PDB" id="5W21">
    <property type="method" value="X-ray"/>
    <property type="resolution" value="3.00 A"/>
    <property type="chains" value="B=25-204"/>
</dbReference>
<dbReference type="PDB" id="6S22">
    <property type="method" value="X-ray"/>
    <property type="resolution" value="1.96 A"/>
    <property type="chains" value="F=170-181"/>
</dbReference>
<dbReference type="PDB" id="7YSH">
    <property type="method" value="EM"/>
    <property type="resolution" value="2.74 A"/>
    <property type="chains" value="B=25-251"/>
</dbReference>
<dbReference type="PDB" id="7YSU">
    <property type="method" value="EM"/>
    <property type="resolution" value="3.20 A"/>
    <property type="chains" value="B=25-203"/>
</dbReference>
<dbReference type="PDB" id="7YSW">
    <property type="method" value="EM"/>
    <property type="resolution" value="3.03 A"/>
    <property type="chains" value="B=25-203"/>
</dbReference>
<dbReference type="PDBsum" id="2P39"/>
<dbReference type="PDBsum" id="5W21"/>
<dbReference type="PDBsum" id="6S22"/>
<dbReference type="PDBsum" id="7YSH"/>
<dbReference type="PDBsum" id="7YSU"/>
<dbReference type="PDBsum" id="7YSW"/>
<dbReference type="EMDB" id="EMD-34075"/>
<dbReference type="EMDB" id="EMD-34082"/>
<dbReference type="EMDB" id="EMD-34084"/>
<dbReference type="SMR" id="Q9GZV9"/>
<dbReference type="BioGRID" id="113748">
    <property type="interactions" value="4"/>
</dbReference>
<dbReference type="CORUM" id="Q9GZV9"/>
<dbReference type="DIP" id="DIP-58507N"/>
<dbReference type="FunCoup" id="Q9GZV9">
    <property type="interactions" value="911"/>
</dbReference>
<dbReference type="IntAct" id="Q9GZV9">
    <property type="interactions" value="6"/>
</dbReference>
<dbReference type="STRING" id="9606.ENSP00000237837"/>
<dbReference type="BindingDB" id="Q9GZV9"/>
<dbReference type="ChEMBL" id="CHEMBL3713913"/>
<dbReference type="DrugCentral" id="Q9GZV9"/>
<dbReference type="TCDB" id="1.A.108.1.2">
    <property type="family name" value="the fibroblast growth factor 2 (fgf2) family"/>
</dbReference>
<dbReference type="GlyCosmos" id="Q9GZV9">
    <property type="glycosylation" value="1 site, No reported glycans"/>
</dbReference>
<dbReference type="GlyGen" id="Q9GZV9">
    <property type="glycosylation" value="6 sites"/>
</dbReference>
<dbReference type="iPTMnet" id="Q9GZV9"/>
<dbReference type="PhosphoSitePlus" id="Q9GZV9"/>
<dbReference type="BioMuta" id="FGF23"/>
<dbReference type="DMDM" id="13626688"/>
<dbReference type="MassIVE" id="Q9GZV9"/>
<dbReference type="PaxDb" id="9606-ENSP00000237837"/>
<dbReference type="PeptideAtlas" id="Q9GZV9"/>
<dbReference type="ABCD" id="Q9GZV9">
    <property type="antibodies" value="1 sequenced antibody"/>
</dbReference>
<dbReference type="Antibodypedia" id="22263">
    <property type="antibodies" value="630 antibodies from 36 providers"/>
</dbReference>
<dbReference type="DNASU" id="8074"/>
<dbReference type="Ensembl" id="ENST00000237837.2">
    <property type="protein sequence ID" value="ENSP00000237837.1"/>
    <property type="gene ID" value="ENSG00000118972.3"/>
</dbReference>
<dbReference type="GeneID" id="8074"/>
<dbReference type="KEGG" id="hsa:8074"/>
<dbReference type="MANE-Select" id="ENST00000237837.2">
    <property type="protein sequence ID" value="ENSP00000237837.1"/>
    <property type="RefSeq nucleotide sequence ID" value="NM_020638.3"/>
    <property type="RefSeq protein sequence ID" value="NP_065689.1"/>
</dbReference>
<dbReference type="UCSC" id="uc001qmq.1">
    <property type="organism name" value="human"/>
</dbReference>
<dbReference type="AGR" id="HGNC:3680"/>
<dbReference type="CTD" id="8074"/>
<dbReference type="DisGeNET" id="8074"/>
<dbReference type="GeneCards" id="FGF23"/>
<dbReference type="GeneReviews" id="FGF23"/>
<dbReference type="HGNC" id="HGNC:3680">
    <property type="gene designation" value="FGF23"/>
</dbReference>
<dbReference type="HPA" id="ENSG00000118972">
    <property type="expression patterns" value="Tissue enhanced (heart muscle, liver)"/>
</dbReference>
<dbReference type="MalaCards" id="FGF23"/>
<dbReference type="MIM" id="193100">
    <property type="type" value="phenotype"/>
</dbReference>
<dbReference type="MIM" id="605380">
    <property type="type" value="gene"/>
</dbReference>
<dbReference type="MIM" id="617993">
    <property type="type" value="phenotype"/>
</dbReference>
<dbReference type="neXtProt" id="NX_Q9GZV9"/>
<dbReference type="OpenTargets" id="ENSG00000118972"/>
<dbReference type="Orphanet" id="89937">
    <property type="disease" value="Autosomal dominant hypophosphatemic rickets"/>
</dbReference>
<dbReference type="Orphanet" id="306661">
    <property type="disease" value="Familial hyperphosphatemic tumoral calcinosis/Hyperphosphatemic hyperostosis syndrome"/>
</dbReference>
<dbReference type="PharmGKB" id="PA28119"/>
<dbReference type="VEuPathDB" id="HostDB:ENSG00000118972"/>
<dbReference type="eggNOG" id="KOG3885">
    <property type="taxonomic scope" value="Eukaryota"/>
</dbReference>
<dbReference type="GeneTree" id="ENSGT00940000160821"/>
<dbReference type="HOGENOM" id="CLU_094251_0_0_1"/>
<dbReference type="InParanoid" id="Q9GZV9"/>
<dbReference type="OMA" id="PSTHDPW"/>
<dbReference type="OrthoDB" id="8909943at2759"/>
<dbReference type="PAN-GO" id="Q9GZV9">
    <property type="GO annotations" value="11 GO annotations based on evolutionary models"/>
</dbReference>
<dbReference type="PhylomeDB" id="Q9GZV9"/>
<dbReference type="TreeFam" id="TF335872"/>
<dbReference type="PathwayCommons" id="Q9GZV9"/>
<dbReference type="Reactome" id="R-HSA-109704">
    <property type="pathway name" value="PI3K Cascade"/>
</dbReference>
<dbReference type="Reactome" id="R-HSA-1257604">
    <property type="pathway name" value="PIP3 activates AKT signaling"/>
</dbReference>
<dbReference type="Reactome" id="R-HSA-1839122">
    <property type="pathway name" value="Signaling by activated point mutants of FGFR1"/>
</dbReference>
<dbReference type="Reactome" id="R-HSA-1839130">
    <property type="pathway name" value="Signaling by activated point mutants of FGFR3"/>
</dbReference>
<dbReference type="Reactome" id="R-HSA-190322">
    <property type="pathway name" value="FGFR4 ligand binding and activation"/>
</dbReference>
<dbReference type="Reactome" id="R-HSA-190372">
    <property type="pathway name" value="FGFR3c ligand binding and activation"/>
</dbReference>
<dbReference type="Reactome" id="R-HSA-190373">
    <property type="pathway name" value="FGFR1c ligand binding and activation"/>
</dbReference>
<dbReference type="Reactome" id="R-HSA-190374">
    <property type="pathway name" value="FGFR1c and Klotho ligand binding and activation"/>
</dbReference>
<dbReference type="Reactome" id="R-HSA-190375">
    <property type="pathway name" value="FGFR2c ligand binding and activation"/>
</dbReference>
<dbReference type="Reactome" id="R-HSA-2033519">
    <property type="pathway name" value="Activated point mutants of FGFR2"/>
</dbReference>
<dbReference type="Reactome" id="R-HSA-2219530">
    <property type="pathway name" value="Constitutive Signaling by Aberrant PI3K in Cancer"/>
</dbReference>
<dbReference type="Reactome" id="R-HSA-381426">
    <property type="pathway name" value="Regulation of Insulin-like Growth Factor (IGF) transport and uptake by Insulin-like Growth Factor Binding Proteins (IGFBPs)"/>
</dbReference>
<dbReference type="Reactome" id="R-HSA-5654219">
    <property type="pathway name" value="Phospholipase C-mediated cascade: FGFR1"/>
</dbReference>
<dbReference type="Reactome" id="R-HSA-5654221">
    <property type="pathway name" value="Phospholipase C-mediated cascade, FGFR2"/>
</dbReference>
<dbReference type="Reactome" id="R-HSA-5654227">
    <property type="pathway name" value="Phospholipase C-mediated cascade, FGFR3"/>
</dbReference>
<dbReference type="Reactome" id="R-HSA-5654228">
    <property type="pathway name" value="Phospholipase C-mediated cascade, FGFR4"/>
</dbReference>
<dbReference type="Reactome" id="R-HSA-5654687">
    <property type="pathway name" value="Downstream signaling of activated FGFR1"/>
</dbReference>
<dbReference type="Reactome" id="R-HSA-5654688">
    <property type="pathway name" value="SHC-mediated cascade:FGFR1"/>
</dbReference>
<dbReference type="Reactome" id="R-HSA-5654689">
    <property type="pathway name" value="PI-3K cascade:FGFR1"/>
</dbReference>
<dbReference type="Reactome" id="R-HSA-5654693">
    <property type="pathway name" value="FRS-mediated FGFR1 signaling"/>
</dbReference>
<dbReference type="Reactome" id="R-HSA-5654695">
    <property type="pathway name" value="PI-3K cascade:FGFR2"/>
</dbReference>
<dbReference type="Reactome" id="R-HSA-5654699">
    <property type="pathway name" value="SHC-mediated cascade:FGFR2"/>
</dbReference>
<dbReference type="Reactome" id="R-HSA-5654700">
    <property type="pathway name" value="FRS-mediated FGFR2 signaling"/>
</dbReference>
<dbReference type="Reactome" id="R-HSA-5654704">
    <property type="pathway name" value="SHC-mediated cascade:FGFR3"/>
</dbReference>
<dbReference type="Reactome" id="R-HSA-5654706">
    <property type="pathway name" value="FRS-mediated FGFR3 signaling"/>
</dbReference>
<dbReference type="Reactome" id="R-HSA-5654710">
    <property type="pathway name" value="PI-3K cascade:FGFR3"/>
</dbReference>
<dbReference type="Reactome" id="R-HSA-5654712">
    <property type="pathway name" value="FRS-mediated FGFR4 signaling"/>
</dbReference>
<dbReference type="Reactome" id="R-HSA-5654719">
    <property type="pathway name" value="SHC-mediated cascade:FGFR4"/>
</dbReference>
<dbReference type="Reactome" id="R-HSA-5654720">
    <property type="pathway name" value="PI-3K cascade:FGFR4"/>
</dbReference>
<dbReference type="Reactome" id="R-HSA-5654726">
    <property type="pathway name" value="Negative regulation of FGFR1 signaling"/>
</dbReference>
<dbReference type="Reactome" id="R-HSA-5654727">
    <property type="pathway name" value="Negative regulation of FGFR2 signaling"/>
</dbReference>
<dbReference type="Reactome" id="R-HSA-5654732">
    <property type="pathway name" value="Negative regulation of FGFR3 signaling"/>
</dbReference>
<dbReference type="Reactome" id="R-HSA-5654733">
    <property type="pathway name" value="Negative regulation of FGFR4 signaling"/>
</dbReference>
<dbReference type="Reactome" id="R-HSA-5655253">
    <property type="pathway name" value="Signaling by FGFR2 in disease"/>
</dbReference>
<dbReference type="Reactome" id="R-HSA-5655302">
    <property type="pathway name" value="Signaling by FGFR1 in disease"/>
</dbReference>
<dbReference type="Reactome" id="R-HSA-5655332">
    <property type="pathway name" value="Signaling by FGFR3 in disease"/>
</dbReference>
<dbReference type="Reactome" id="R-HSA-5658623">
    <property type="pathway name" value="FGFRL1 modulation of FGFR1 signaling"/>
</dbReference>
<dbReference type="Reactome" id="R-HSA-5673001">
    <property type="pathway name" value="RAF/MAP kinase cascade"/>
</dbReference>
<dbReference type="Reactome" id="R-HSA-6811558">
    <property type="pathway name" value="PI5P, PP2A and IER3 Regulate PI3K/AKT Signaling"/>
</dbReference>
<dbReference type="Reactome" id="R-HSA-8957275">
    <property type="pathway name" value="Post-translational protein phosphorylation"/>
</dbReference>
<dbReference type="SignaLink" id="Q9GZV9"/>
<dbReference type="SIGNOR" id="Q9GZV9"/>
<dbReference type="BioGRID-ORCS" id="8074">
    <property type="hits" value="7 hits in 1156 CRISPR screens"/>
</dbReference>
<dbReference type="EvolutionaryTrace" id="Q9GZV9"/>
<dbReference type="GeneWiki" id="Fibroblast_growth_factor_23"/>
<dbReference type="GenomeRNAi" id="8074"/>
<dbReference type="Pharos" id="Q9GZV9">
    <property type="development level" value="Tclin"/>
</dbReference>
<dbReference type="PRO" id="PR:Q9GZV9"/>
<dbReference type="Proteomes" id="UP000005640">
    <property type="component" value="Chromosome 12"/>
</dbReference>
<dbReference type="RNAct" id="Q9GZV9">
    <property type="molecule type" value="protein"/>
</dbReference>
<dbReference type="Bgee" id="ENSG00000118972">
    <property type="expression patterns" value="Expressed in sural nerve and 30 other cell types or tissues"/>
</dbReference>
<dbReference type="GO" id="GO:0005737">
    <property type="term" value="C:cytoplasm"/>
    <property type="evidence" value="ECO:0000318"/>
    <property type="project" value="GO_Central"/>
</dbReference>
<dbReference type="GO" id="GO:0005788">
    <property type="term" value="C:endoplasmic reticulum lumen"/>
    <property type="evidence" value="ECO:0000304"/>
    <property type="project" value="Reactome"/>
</dbReference>
<dbReference type="GO" id="GO:0005576">
    <property type="term" value="C:extracellular region"/>
    <property type="evidence" value="ECO:0000304"/>
    <property type="project" value="Reactome"/>
</dbReference>
<dbReference type="GO" id="GO:0005615">
    <property type="term" value="C:extracellular space"/>
    <property type="evidence" value="ECO:0000314"/>
    <property type="project" value="UniProtKB"/>
</dbReference>
<dbReference type="GO" id="GO:0005796">
    <property type="term" value="C:Golgi lumen"/>
    <property type="evidence" value="ECO:0000304"/>
    <property type="project" value="Reactome"/>
</dbReference>
<dbReference type="GO" id="GO:0008083">
    <property type="term" value="F:growth factor activity"/>
    <property type="evidence" value="ECO:0000318"/>
    <property type="project" value="GO_Central"/>
</dbReference>
<dbReference type="GO" id="GO:0005105">
    <property type="term" value="F:type 1 fibroblast growth factor receptor binding"/>
    <property type="evidence" value="ECO:0000318"/>
    <property type="project" value="GO_Central"/>
</dbReference>
<dbReference type="GO" id="GO:0055074">
    <property type="term" value="P:calcium ion homeostasis"/>
    <property type="evidence" value="ECO:0007669"/>
    <property type="project" value="Ensembl"/>
</dbReference>
<dbReference type="GO" id="GO:0071354">
    <property type="term" value="P:cellular response to interleukin-6"/>
    <property type="evidence" value="ECO:0007669"/>
    <property type="project" value="Ensembl"/>
</dbReference>
<dbReference type="GO" id="GO:0044320">
    <property type="term" value="P:cellular response to leptin stimulus"/>
    <property type="evidence" value="ECO:0007669"/>
    <property type="project" value="Ensembl"/>
</dbReference>
<dbReference type="GO" id="GO:0071374">
    <property type="term" value="P:cellular response to parathyroid hormone stimulus"/>
    <property type="evidence" value="ECO:0007669"/>
    <property type="project" value="Ensembl"/>
</dbReference>
<dbReference type="GO" id="GO:0071305">
    <property type="term" value="P:cellular response to vitamin D"/>
    <property type="evidence" value="ECO:0007669"/>
    <property type="project" value="Ensembl"/>
</dbReference>
<dbReference type="GO" id="GO:0070371">
    <property type="term" value="P:ERK1 and ERK2 cascade"/>
    <property type="evidence" value="ECO:0007669"/>
    <property type="project" value="Ensembl"/>
</dbReference>
<dbReference type="GO" id="GO:0008543">
    <property type="term" value="P:fibroblast growth factor receptor signaling pathway"/>
    <property type="evidence" value="ECO:0000318"/>
    <property type="project" value="GO_Central"/>
</dbReference>
<dbReference type="GO" id="GO:0030643">
    <property type="term" value="P:intracellular phosphate ion homeostasis"/>
    <property type="evidence" value="ECO:0007669"/>
    <property type="project" value="Ensembl"/>
</dbReference>
<dbReference type="GO" id="GO:0030502">
    <property type="term" value="P:negative regulation of bone mineralization"/>
    <property type="evidence" value="ECO:0000314"/>
    <property type="project" value="UniProtKB"/>
</dbReference>
<dbReference type="GO" id="GO:0046888">
    <property type="term" value="P:negative regulation of hormone secretion"/>
    <property type="evidence" value="ECO:0000250"/>
    <property type="project" value="UniProtKB"/>
</dbReference>
<dbReference type="GO" id="GO:0045668">
    <property type="term" value="P:negative regulation of osteoblast differentiation"/>
    <property type="evidence" value="ECO:0000314"/>
    <property type="project" value="UniProtKB"/>
</dbReference>
<dbReference type="GO" id="GO:0022008">
    <property type="term" value="P:neurogenesis"/>
    <property type="evidence" value="ECO:0000318"/>
    <property type="project" value="GO_Central"/>
</dbReference>
<dbReference type="GO" id="GO:0055062">
    <property type="term" value="P:phosphate ion homeostasis"/>
    <property type="evidence" value="ECO:0000315"/>
    <property type="project" value="UniProtKB"/>
</dbReference>
<dbReference type="GO" id="GO:0008284">
    <property type="term" value="P:positive regulation of cell population proliferation"/>
    <property type="evidence" value="ECO:0000318"/>
    <property type="project" value="GO_Central"/>
</dbReference>
<dbReference type="GO" id="GO:0045893">
    <property type="term" value="P:positive regulation of DNA-templated transcription"/>
    <property type="evidence" value="ECO:0007669"/>
    <property type="project" value="Ensembl"/>
</dbReference>
<dbReference type="GO" id="GO:0070374">
    <property type="term" value="P:positive regulation of ERK1 and ERK2 cascade"/>
    <property type="evidence" value="ECO:0007669"/>
    <property type="project" value="Ensembl"/>
</dbReference>
<dbReference type="GO" id="GO:0043410">
    <property type="term" value="P:positive regulation of MAPK cascade"/>
    <property type="evidence" value="ECO:0000318"/>
    <property type="project" value="GO_Central"/>
</dbReference>
<dbReference type="GO" id="GO:0090080">
    <property type="term" value="P:positive regulation of MAPKKK cascade by fibroblast growth factor receptor signaling pathway"/>
    <property type="evidence" value="ECO:0007669"/>
    <property type="project" value="Ensembl"/>
</dbReference>
<dbReference type="GO" id="GO:0010980">
    <property type="term" value="P:positive regulation of vitamin D 24-hydroxylase activity"/>
    <property type="evidence" value="ECO:0000314"/>
    <property type="project" value="UniProtKB"/>
</dbReference>
<dbReference type="GO" id="GO:0030334">
    <property type="term" value="P:regulation of cell migration"/>
    <property type="evidence" value="ECO:0000318"/>
    <property type="project" value="GO_Central"/>
</dbReference>
<dbReference type="GO" id="GO:0010966">
    <property type="term" value="P:regulation of phosphate transport"/>
    <property type="evidence" value="ECO:0000314"/>
    <property type="project" value="UniProtKB"/>
</dbReference>
<dbReference type="GO" id="GO:0032026">
    <property type="term" value="P:response to magnesium ion"/>
    <property type="evidence" value="ECO:0007669"/>
    <property type="project" value="Ensembl"/>
</dbReference>
<dbReference type="GO" id="GO:1904383">
    <property type="term" value="P:response to sodium phosphate"/>
    <property type="evidence" value="ECO:0007669"/>
    <property type="project" value="Ensembl"/>
</dbReference>
<dbReference type="GO" id="GO:0042369">
    <property type="term" value="P:vitamin D catabolic process"/>
    <property type="evidence" value="ECO:0000314"/>
    <property type="project" value="UniProtKB"/>
</dbReference>
<dbReference type="CDD" id="cd23333">
    <property type="entry name" value="beta-trefoil_FGF23"/>
    <property type="match status" value="1"/>
</dbReference>
<dbReference type="FunFam" id="2.80.10.50:FF:000062">
    <property type="entry name" value="Fibroblast growth factor 23"/>
    <property type="match status" value="1"/>
</dbReference>
<dbReference type="Gene3D" id="2.80.10.50">
    <property type="match status" value="1"/>
</dbReference>
<dbReference type="InterPro" id="IPR002209">
    <property type="entry name" value="Fibroblast_GF_fam"/>
</dbReference>
<dbReference type="InterPro" id="IPR008996">
    <property type="entry name" value="IL1/FGF"/>
</dbReference>
<dbReference type="PANTHER" id="PTHR11486">
    <property type="entry name" value="FIBROBLAST GROWTH FACTOR"/>
    <property type="match status" value="1"/>
</dbReference>
<dbReference type="Pfam" id="PF00167">
    <property type="entry name" value="FGF"/>
    <property type="match status" value="1"/>
</dbReference>
<dbReference type="PRINTS" id="PR00262">
    <property type="entry name" value="IL1HBGF"/>
</dbReference>
<dbReference type="SMART" id="SM00442">
    <property type="entry name" value="FGF"/>
    <property type="match status" value="1"/>
</dbReference>
<dbReference type="SUPFAM" id="SSF50353">
    <property type="entry name" value="Cytokine"/>
    <property type="match status" value="1"/>
</dbReference>
<proteinExistence type="evidence at protein level"/>
<protein>
    <recommendedName>
        <fullName>Fibroblast growth factor 23</fullName>
        <shortName>FGF-23</shortName>
    </recommendedName>
    <alternativeName>
        <fullName>Phosphatonin</fullName>
    </alternativeName>
    <alternativeName>
        <fullName>Tumor-derived hypophosphatemia-inducing factor</fullName>
    </alternativeName>
    <component>
        <recommendedName>
            <fullName>Fibroblast growth factor 23 N-terminal peptide</fullName>
        </recommendedName>
    </component>
    <component>
        <recommendedName>
            <fullName>Fibroblast growth factor 23 C-terminal peptide</fullName>
        </recommendedName>
    </component>
</protein>
<accession>Q9GZV9</accession>
<accession>Q4V758</accession>
<feature type="signal peptide" evidence="11">
    <location>
        <begin position="1"/>
        <end position="24"/>
    </location>
</feature>
<feature type="chain" id="PRO_0000008998" description="Fibroblast growth factor 23">
    <location>
        <begin position="25"/>
        <end position="251"/>
    </location>
</feature>
<feature type="chain" id="PRO_0000352875" description="Fibroblast growth factor 23 N-terminal peptide">
    <location>
        <begin position="25"/>
        <end position="179"/>
    </location>
</feature>
<feature type="chain" id="PRO_0000352876" description="Fibroblast growth factor 23 C-terminal peptide">
    <location>
        <begin position="180"/>
        <end position="251"/>
    </location>
</feature>
<feature type="region of interest" description="Disordered" evidence="3">
    <location>
        <begin position="172"/>
        <end position="221"/>
    </location>
</feature>
<feature type="compositionally biased region" description="Polar residues" evidence="3">
    <location>
        <begin position="205"/>
        <end position="219"/>
    </location>
</feature>
<feature type="site" description="Cleavage; by proprotein convertases">
    <location>
        <begin position="179"/>
        <end position="180"/>
    </location>
</feature>
<feature type="modified residue" description="Phosphoserine; by FAM20C" evidence="19">
    <location>
        <position position="180"/>
    </location>
</feature>
<feature type="glycosylation site" description="O-linked (GalNAc) threonine" evidence="19">
    <location>
        <position position="171"/>
    </location>
</feature>
<feature type="glycosylation site" description="O-linked (GalNAc) threonine" evidence="16 19">
    <location>
        <position position="178"/>
    </location>
</feature>
<feature type="disulfide bond">
    <location>
        <begin position="95"/>
        <end position="113"/>
    </location>
</feature>
<feature type="sequence variant" id="VAR_023831" description="In HFTC2; only the C-terminal fragment is secreted, whereas the intact protein is retained in the Golgi complex; dbSNP:rs104894342." evidence="12">
    <original>S</original>
    <variation>G</variation>
    <location>
        <position position="71"/>
    </location>
</feature>
<feature type="sequence variant" id="VAR_071711" description="In HFTC2; dbSNP:rs104894343." evidence="14">
    <original>M</original>
    <variation>T</variation>
    <location>
        <position position="96"/>
    </location>
</feature>
<feature type="sequence variant" id="VAR_071712" description="In HFTC2; full-length and N-terminal fragments are barely detectable, whereas a C-terminal fragment with the same molecular weight as that from wild-type can be detected; dbSNP:rs104894344." evidence="13">
    <original>S</original>
    <variation>F</variation>
    <location>
        <position position="129"/>
    </location>
</feature>
<feature type="sequence variant" id="VAR_071713" description="In HFTC2; dbSNP:rs772964687." evidence="18">
    <original>F</original>
    <variation>L</variation>
    <location>
        <position position="157"/>
    </location>
</feature>
<feature type="sequence variant" id="VAR_010717" description="In ADHR; partially resistant to cleavage by furin; dbSNP:rs104894347." evidence="4 16">
    <original>R</original>
    <variation>Q</variation>
    <location>
        <position position="176"/>
    </location>
</feature>
<feature type="sequence variant" id="VAR_010719" description="In ADHR; C-terminal processing is abolished; reduced proteolysis by PHEX; resistant to cleavage by furin; dbSNP:rs193922702." evidence="4 6 16">
    <original>R</original>
    <variation>Q</variation>
    <location>
        <position position="179"/>
    </location>
</feature>
<feature type="sequence variant" id="VAR_010718" description="In ADHR; C-terminal processing is abolished; dbSNP:rs28937882." evidence="4">
    <original>R</original>
    <variation>W</variation>
    <location>
        <position position="179"/>
    </location>
</feature>
<feature type="sequence variant" id="VAR_018887" description="In dbSNP:rs13312793." evidence="20">
    <original>P</original>
    <variation>S</variation>
    <location>
        <position position="195"/>
    </location>
</feature>
<feature type="sequence variant" id="VAR_010720" description="In dbSNP:rs7955866." evidence="4 20">
    <original>T</original>
    <variation>M</variation>
    <location>
        <position position="239"/>
    </location>
</feature>
<feature type="mutagenesis site" description="Loss of glycosylation." evidence="19">
    <original>T</original>
    <variation>A</variation>
    <location>
        <position position="178"/>
    </location>
</feature>
<feature type="strand" evidence="24">
    <location>
        <begin position="32"/>
        <end position="34"/>
    </location>
</feature>
<feature type="strand" evidence="25">
    <location>
        <begin position="36"/>
        <end position="38"/>
    </location>
</feature>
<feature type="strand" evidence="22">
    <location>
        <begin position="40"/>
        <end position="43"/>
    </location>
</feature>
<feature type="strand" evidence="22">
    <location>
        <begin position="47"/>
        <end position="49"/>
    </location>
</feature>
<feature type="strand" evidence="22">
    <location>
        <begin position="52"/>
        <end position="55"/>
    </location>
</feature>
<feature type="strand" evidence="22">
    <location>
        <begin position="61"/>
        <end position="66"/>
    </location>
</feature>
<feature type="turn" evidence="22">
    <location>
        <begin position="69"/>
        <end position="71"/>
    </location>
</feature>
<feature type="strand" evidence="22">
    <location>
        <begin position="73"/>
        <end position="77"/>
    </location>
</feature>
<feature type="helix" evidence="22">
    <location>
        <begin position="79"/>
        <end position="81"/>
    </location>
</feature>
<feature type="strand" evidence="22">
    <location>
        <begin position="82"/>
        <end position="87"/>
    </location>
</feature>
<feature type="turn" evidence="22">
    <location>
        <begin position="88"/>
        <end position="91"/>
    </location>
</feature>
<feature type="strand" evidence="22">
    <location>
        <begin position="92"/>
        <end position="96"/>
    </location>
</feature>
<feature type="strand" evidence="22">
    <location>
        <begin position="102"/>
        <end position="107"/>
    </location>
</feature>
<feature type="turn" evidence="22">
    <location>
        <begin position="110"/>
        <end position="112"/>
    </location>
</feature>
<feature type="strand" evidence="22">
    <location>
        <begin position="115"/>
        <end position="119"/>
    </location>
</feature>
<feature type="strand" evidence="23">
    <location>
        <begin position="121"/>
        <end position="123"/>
    </location>
</feature>
<feature type="strand" evidence="22">
    <location>
        <begin position="125"/>
        <end position="128"/>
    </location>
</feature>
<feature type="turn" evidence="22">
    <location>
        <begin position="130"/>
        <end position="132"/>
    </location>
</feature>
<feature type="strand" evidence="22">
    <location>
        <begin position="138"/>
        <end position="140"/>
    </location>
</feature>
<feature type="strand" evidence="23">
    <location>
        <begin position="147"/>
        <end position="149"/>
    </location>
</feature>
<feature type="helix" evidence="22">
    <location>
        <begin position="153"/>
        <end position="155"/>
    </location>
</feature>
<feature type="strand" evidence="22">
    <location>
        <begin position="157"/>
        <end position="161"/>
    </location>
</feature>
<feature type="helix" evidence="22">
    <location>
        <begin position="166"/>
        <end position="168"/>
    </location>
</feature>
<keyword id="KW-0002">3D-structure</keyword>
<keyword id="KW-0221">Differentiation</keyword>
<keyword id="KW-0903">Direct protein sequencing</keyword>
<keyword id="KW-0225">Disease variant</keyword>
<keyword id="KW-1015">Disulfide bond</keyword>
<keyword id="KW-0325">Glycoprotein</keyword>
<keyword id="KW-0339">Growth factor</keyword>
<keyword id="KW-0597">Phosphoprotein</keyword>
<keyword id="KW-1267">Proteomics identification</keyword>
<keyword id="KW-1185">Reference proteome</keyword>
<keyword id="KW-0964">Secreted</keyword>
<keyword id="KW-0732">Signal</keyword>
<reference key="1">
    <citation type="journal article" date="2000" name="Biochem. Biophys. Res. Commun.">
        <title>Identification of a novel fibroblast growth factor, FGF-23, preferentially expressed in the ventrolateral thalamic nucleus of the brain.</title>
        <authorList>
            <person name="Yamashita T."/>
            <person name="Yoshioka M."/>
            <person name="Itoh N."/>
        </authorList>
    </citation>
    <scope>NUCLEOTIDE SEQUENCE [MRNA]</scope>
</reference>
<reference key="2">
    <citation type="journal article" date="2000" name="Nat. Genet.">
        <title>Autosomal dominant hypophosphataemic rickets is associated with mutations in FGF23.</title>
        <authorList>
            <person name="White K.E."/>
            <person name="Evans W.E."/>
            <person name="O'Riordan J.L.H."/>
            <person name="Speer M.C."/>
            <person name="Econs M.J."/>
            <person name="Lorenz-Depiereux B."/>
            <person name="Grabowski M."/>
            <person name="Meitinger T."/>
            <person name="Strom T.M."/>
        </authorList>
    </citation>
    <scope>NUCLEOTIDE SEQUENCE [MRNA]</scope>
    <scope>FUNCTION</scope>
    <scope>VARIANTS ADHR GLN-176; GLN-179 AND TRP-179</scope>
    <scope>VARIANT MET-239</scope>
</reference>
<reference key="3">
    <citation type="journal article" date="2001" name="Proc. Natl. Acad. Sci. U.S.A.">
        <title>Cloning and characterization of FGF23 as a causative factor of tumor-induced osteomalacia.</title>
        <authorList>
            <person name="Shimada T."/>
            <person name="Mizutani S."/>
            <person name="Muto T."/>
            <person name="Yoneya T."/>
            <person name="Hino R."/>
            <person name="Takeda S."/>
            <person name="Takeuchi Y."/>
            <person name="Fujita T."/>
            <person name="Fukumoto S."/>
            <person name="Yamashita T."/>
        </authorList>
    </citation>
    <scope>NUCLEOTIDE SEQUENCE [MRNA]</scope>
</reference>
<reference key="4">
    <citation type="journal article" date="2003" name="Genome Res.">
        <title>The secreted protein discovery initiative (SPDI), a large-scale effort to identify novel human secreted and transmembrane proteins: a bioinformatics assessment.</title>
        <authorList>
            <person name="Clark H.F."/>
            <person name="Gurney A.L."/>
            <person name="Abaya E."/>
            <person name="Baker K."/>
            <person name="Baldwin D.T."/>
            <person name="Brush J."/>
            <person name="Chen J."/>
            <person name="Chow B."/>
            <person name="Chui C."/>
            <person name="Crowley C."/>
            <person name="Currell B."/>
            <person name="Deuel B."/>
            <person name="Dowd P."/>
            <person name="Eaton D."/>
            <person name="Foster J.S."/>
            <person name="Grimaldi C."/>
            <person name="Gu Q."/>
            <person name="Hass P.E."/>
            <person name="Heldens S."/>
            <person name="Huang A."/>
            <person name="Kim H.S."/>
            <person name="Klimowski L."/>
            <person name="Jin Y."/>
            <person name="Johnson S."/>
            <person name="Lee J."/>
            <person name="Lewis L."/>
            <person name="Liao D."/>
            <person name="Mark M.R."/>
            <person name="Robbie E."/>
            <person name="Sanchez C."/>
            <person name="Schoenfeld J."/>
            <person name="Seshagiri S."/>
            <person name="Simmons L."/>
            <person name="Singh J."/>
            <person name="Smith V."/>
            <person name="Stinson J."/>
            <person name="Vagts A."/>
            <person name="Vandlen R.L."/>
            <person name="Watanabe C."/>
            <person name="Wieand D."/>
            <person name="Woods K."/>
            <person name="Xie M.-H."/>
            <person name="Yansura D.G."/>
            <person name="Yi S."/>
            <person name="Yu G."/>
            <person name="Yuan J."/>
            <person name="Zhang M."/>
            <person name="Zhang Z."/>
            <person name="Goddard A.D."/>
            <person name="Wood W.I."/>
            <person name="Godowski P.J."/>
            <person name="Gray A.M."/>
        </authorList>
    </citation>
    <scope>NUCLEOTIDE SEQUENCE [LARGE SCALE MRNA]</scope>
</reference>
<reference key="5">
    <citation type="submission" date="2004-03" db="EMBL/GenBank/DDBJ databases">
        <authorList>
            <consortium name="NIEHS SNPs program"/>
        </authorList>
    </citation>
    <scope>NUCLEOTIDE SEQUENCE [GENOMIC DNA]</scope>
    <scope>VARIANTS SER-195 AND MET-239</scope>
</reference>
<reference key="6">
    <citation type="journal article" date="2004" name="Genome Res.">
        <title>The status, quality, and expansion of the NIH full-length cDNA project: the Mammalian Gene Collection (MGC).</title>
        <authorList>
            <consortium name="The MGC Project Team"/>
        </authorList>
    </citation>
    <scope>NUCLEOTIDE SEQUENCE [LARGE SCALE MRNA]</scope>
</reference>
<reference key="7">
    <citation type="journal article" date="2004" name="Protein Sci.">
        <title>Signal peptide prediction based on analysis of experimentally verified cleavage sites.</title>
        <authorList>
            <person name="Zhang Z."/>
            <person name="Henzel W.J."/>
        </authorList>
    </citation>
    <scope>PROTEIN SEQUENCE OF 25-39</scope>
</reference>
<reference key="8">
    <citation type="journal article" date="2001" name="Biochem. Biophys. Res. Commun.">
        <title>FGF-23 inhibits renal tubular phosphate transport and is a PHEX substrate.</title>
        <authorList>
            <person name="Bowe A.E."/>
            <person name="Finnegan R."/>
            <person name="Jan de Beur S.M."/>
            <person name="Cho J."/>
            <person name="Levine M.A."/>
            <person name="Kumar R."/>
            <person name="Schiavi S.C."/>
        </authorList>
    </citation>
    <scope>FUNCTION</scope>
    <scope>CHARACTERIZATION OF VARIANT ADHR GLN-179</scope>
</reference>
<reference key="9">
    <citation type="journal article" date="2001" name="J. Clin. Endocrinol. Metab.">
        <title>The autosomal dominant hypophosphatemic rickets (ADHR) gene is a secreted polypeptide overexpressed by tumors that cause phosphate wasting.</title>
        <authorList>
            <person name="White K.E."/>
            <person name="Jonsson K.B."/>
            <person name="Carn G."/>
            <person name="Hampson G."/>
            <person name="Spector T.D."/>
            <person name="Mannstadt M."/>
            <person name="Lorenz-Depiereux B."/>
            <person name="Miyauchi A."/>
            <person name="Yang I.M."/>
            <person name="Ljunggren O."/>
            <person name="Meitinger T."/>
            <person name="Strom T.M."/>
            <person name="Jueppner H."/>
            <person name="Econs M.J."/>
        </authorList>
    </citation>
    <scope>PROTEOLYTIC PROCESSING</scope>
</reference>
<reference key="10">
    <citation type="journal article" date="2002" name="Endocrinology">
        <title>Mutant FGF-23 responsible for autosomal dominant hypophosphatemic rickets is resistant to proteolytic cleavage and causes hypophosphatemia in vivo.</title>
        <authorList>
            <person name="Shimada T."/>
            <person name="Muto T."/>
            <person name="Urakawa I."/>
            <person name="Yoneya T."/>
            <person name="Yamazaki Y."/>
            <person name="Okawa K."/>
            <person name="Takeuchi Y."/>
            <person name="Fujita T."/>
            <person name="Fukumoto S."/>
            <person name="Yamashita T."/>
        </authorList>
    </citation>
    <scope>PROTEOLYTIC PROCESSING</scope>
</reference>
<reference key="11">
    <citation type="journal article" date="2003" name="J. Clin. Invest.">
        <title>FGF-23 in fibrous dysplasia of bone and its relationship to renal phosphate wasting.</title>
        <authorList>
            <person name="Riminucci M."/>
            <person name="Collins M.T."/>
            <person name="Fedarko N.S."/>
            <person name="Cherman N."/>
            <person name="Corsi A."/>
            <person name="White K.E."/>
            <person name="Waguespack S."/>
            <person name="Gupta A."/>
            <person name="Hannon T."/>
            <person name="Econs M.J."/>
            <person name="Bianco P."/>
            <person name="Gehron Robey P."/>
        </authorList>
    </citation>
    <scope>TISSUE SPECIFICITY</scope>
</reference>
<reference key="12">
    <citation type="journal article" date="2004" name="Bone">
        <title>FGF23 is processed by proprotein convertases but not by PHEX.</title>
        <authorList>
            <person name="Benet-Pages A."/>
            <person name="Lorenz-Depiereux B."/>
            <person name="Zischka H."/>
            <person name="White K.E."/>
            <person name="Econs M.J."/>
            <person name="Strom T.M."/>
        </authorList>
    </citation>
    <scope>PROTEOLYTIC PROCESSING BY PROPROTEIN CONVERTASES</scope>
</reference>
<reference key="13">
    <citation type="journal article" date="2004" name="J. Bone Miner. Res.">
        <title>FGF-23 is a potent regulator of vitamin D metabolism and phosphate homeostasis.</title>
        <authorList>
            <person name="Shimada T."/>
            <person name="Hasegawa H."/>
            <person name="Yamazaki Y."/>
            <person name="Muto T."/>
            <person name="Hino R."/>
            <person name="Takeuchi Y."/>
            <person name="Fujita T."/>
            <person name="Nakahara K."/>
            <person name="Fukumoto S."/>
            <person name="Yamashita T."/>
        </authorList>
    </citation>
    <scope>FUNCTION</scope>
</reference>
<reference key="14">
    <citation type="journal article" date="2006" name="J. Biol. Chem.">
        <title>Receptor specificity of the fibroblast growth factor family. The complete mammalian FGF family.</title>
        <authorList>
            <person name="Zhang X."/>
            <person name="Ibrahimi O.A."/>
            <person name="Olsen S.K."/>
            <person name="Umemori H."/>
            <person name="Mohammadi M."/>
            <person name="Ornitz D.M."/>
        </authorList>
    </citation>
    <scope>INTERACTION WITH FGFR1; FGFR2; FGFR3 AND FGFR4</scope>
</reference>
<reference key="15">
    <citation type="journal article" date="2006" name="J. Biol. Chem.">
        <title>Polypeptide GalNAc-transferase T3 and familial tumoral calcinosis. Secretion of fibroblast growth factor 23 requires O-glycosylation.</title>
        <authorList>
            <person name="Kato K."/>
            <person name="Jeanneau C."/>
            <person name="Tarp M.A."/>
            <person name="Benet-Pages A."/>
            <person name="Lorenz-Depiereux B."/>
            <person name="Bennett E.P."/>
            <person name="Mandel U."/>
            <person name="Strom T.M."/>
            <person name="Clausen H."/>
        </authorList>
    </citation>
    <scope>SUBCELLULAR LOCATION</scope>
    <scope>GLYCOSYLATION AT THR-178</scope>
    <scope>CHARACTERIZATION OF VARIANTS ADHR GLN-176 AND GLN-179</scope>
    <scope>IDENTIFICATION BY MASS SPECTROMETRY</scope>
</reference>
<reference key="16">
    <citation type="journal article" date="2008" name="J. Bone Miner. Res.">
        <title>Overexpression of fibroblast growth factor 23 suppresses osteoblast differentiation and matrix mineralization in vitro.</title>
        <authorList>
            <person name="Wang H."/>
            <person name="Yoshiko Y."/>
            <person name="Yamamoto R."/>
            <person name="Minamizaki T."/>
            <person name="Kozai K."/>
            <person name="Tanne K."/>
            <person name="Aubin J.E."/>
            <person name="Maeda N."/>
        </authorList>
    </citation>
    <scope>FUNCTION</scope>
</reference>
<reference key="17">
    <citation type="journal article" date="2010" name="Nat. Rev. Cancer">
        <title>Fibroblast growth factor signalling: from development to cancer.</title>
        <authorList>
            <person name="Turner N."/>
            <person name="Grose R."/>
        </authorList>
    </citation>
    <scope>REVIEW</scope>
</reference>
<reference key="18">
    <citation type="journal article" date="2020" name="Nat. Chem. Biol.">
        <title>Molecular basis for fibroblast growth factor 23 O-glycosylation by GalNAc-T3.</title>
        <authorList>
            <person name="de Las Rivas M."/>
            <person name="Paul Daniel E.J."/>
            <person name="Narimatsu Y."/>
            <person name="Companon I."/>
            <person name="Kato K."/>
            <person name="Hermosilla P."/>
            <person name="Thureau A."/>
            <person name="Ceballos-Laita L."/>
            <person name="Coelho H."/>
            <person name="Bernado P."/>
            <person name="Marcelo F."/>
            <person name="Hansen L."/>
            <person name="Maeda R."/>
            <person name="Lostao A."/>
            <person name="Corzana F."/>
            <person name="Clausen H."/>
            <person name="Gerken T.A."/>
            <person name="Hurtado-Guerrero R."/>
        </authorList>
    </citation>
    <scope>GLYCOSYLATION AT THR-171 AND THR-178</scope>
    <scope>PHOSPHORYLATION AT SER-180</scope>
    <scope>MUTAGENESIS OF THR-178</scope>
</reference>
<reference key="19">
    <citation type="journal article" date="2007" name="Mol. Cell. Biol.">
        <title>Molecular insights into the klotho-dependent, endocrine mode of action of fibroblast growth factor 19 subfamily members.</title>
        <authorList>
            <person name="Goetz R."/>
            <person name="Beenken A."/>
            <person name="Ibrahimi O.A."/>
            <person name="Kalinina J."/>
            <person name="Olsen S.K."/>
            <person name="Eliseenkova A.V."/>
            <person name="Xu C."/>
            <person name="Neubert T.A."/>
            <person name="Zhang F."/>
            <person name="Linhardt R.J."/>
            <person name="Yu X."/>
            <person name="White K.E."/>
            <person name="Inagaki T."/>
            <person name="Kliewer S.A."/>
            <person name="Yamamoto M."/>
            <person name="Kurosu H."/>
            <person name="Ogawa Y."/>
            <person name="Kuro-o M."/>
            <person name="Lanske B."/>
            <person name="Razzaque M.S."/>
            <person name="Mohammadi M."/>
        </authorList>
    </citation>
    <scope>X-RAY CRYSTALLOGRAPHY (1.5 ANGSTROMS) OF 25-179</scope>
</reference>
<reference key="20">
    <citation type="journal article" date="2005" name="Hum. Genet.">
        <title>A novel homozygous missense mutation in FGF23 causes Familial Tumoral Calcinosis associated with disseminated visceral calcification.</title>
        <authorList>
            <person name="Chefetz I."/>
            <person name="Heller R."/>
            <person name="Galli-Tsinopoulou A."/>
            <person name="Richard G."/>
            <person name="Wollnik B."/>
            <person name="Indelman M."/>
            <person name="Koerber F."/>
            <person name="Topaz O."/>
            <person name="Bergman R."/>
            <person name="Sprecher E."/>
            <person name="Schoenau E."/>
        </authorList>
    </citation>
    <scope>VARIANT HFTC2 THR-96</scope>
</reference>
<reference key="21">
    <citation type="journal article" date="2005" name="Hum. Mol. Genet.">
        <title>An FGF23 missense mutation causes familial tumoral calcinosis with hyperphosphatemia.</title>
        <authorList>
            <person name="Benet-Pages A."/>
            <person name="Orlik P."/>
            <person name="Strom T.M."/>
            <person name="Lorenz-Depiereux B."/>
        </authorList>
    </citation>
    <scope>VARIANT HFTC2 GLY-71</scope>
</reference>
<reference key="22">
    <citation type="journal article" date="2005" name="J. Clin. Endocrinol. Metab.">
        <title>A novel mutation in fibroblast growth factor 23 gene as a cause of tumoral calcinosis.</title>
        <authorList>
            <person name="Araya K."/>
            <person name="Fukumoto S."/>
            <person name="Backenroth R."/>
            <person name="Takeuchi Y."/>
            <person name="Nakayama K."/>
            <person name="Ito N."/>
            <person name="Yoshii N."/>
            <person name="Yamazaki Y."/>
            <person name="Yamashita T."/>
            <person name="Silver J."/>
            <person name="Igarashi T."/>
            <person name="Fujita T."/>
        </authorList>
    </citation>
    <scope>VARIANT HFTC2 PHE-129</scope>
    <scope>CHARACTERIZATION OF VARIANT HFTC2 PHE-129</scope>
</reference>
<reference key="23">
    <citation type="journal article" date="2014" name="Gene">
        <title>A new missense mutation in FGF23 gene in a male with hyperostosis-hyperphosphatemia syndrome (HHS).</title>
        <authorList>
            <person name="Abbasi F."/>
            <person name="Ghafouri-Fard S."/>
            <person name="Javaheri M."/>
            <person name="Dideban A."/>
            <person name="Ebrahimi A."/>
            <person name="Ebrahim-Habibi A."/>
        </authorList>
    </citation>
    <scope>VARIANT HFTC2 LEU-157</scope>
</reference>
<sequence>MLGARLRLWVCALCSVCSMSVLRAYPNASPLLGSSWGGLIHLYTATARNSYHLQIHKNGHVDGAPHQTIYSALMIRSEDAGFVVITGVMSRRYLCMDFRGNIFGSHYFDPENCRFQHQTLENGYDVYHSPQYHFLVSLGRAKRAFLPGMNPPPYSQFLSRRNEIPLIHFNTPIPRRHTRSAEDDSERDPLNVLKPRARMTPAPASCSQELPSAEDNSPMASDPLGVVRGGRVNTHAGGTGPEGCRPFAKFI</sequence>